<evidence type="ECO:0000255" key="1">
    <source>
        <dbReference type="HAMAP-Rule" id="MF_01218"/>
    </source>
</evidence>
<evidence type="ECO:0007829" key="2">
    <source>
        <dbReference type="PDB" id="5E38"/>
    </source>
</evidence>
<accession>P9WFF3</accession>
<accession>L0TCE8</accession>
<accession>P0A658</accession>
<accession>P94928</accession>
<sequence>MQVHVVDHPLAAARLTTLRDERTDNAGFRAALRELTLLLIYEATRDAPCEPVPIRTPLAETVGSRLTKPPLLVPVLRAGLGMVDEAHAALPEAHVGFVGVARDEQTHQPVPYLDSLPDDLTDVPVMVLDPMVATGGSMTHTLGLLISRGAADITVLCVVAAPEGIAALQKAAPNVRLFTAAIDEGLNEVAYIVPGLGDAGDRQFGPR</sequence>
<organism>
    <name type="scientific">Mycobacterium tuberculosis (strain ATCC 25618 / H37Rv)</name>
    <dbReference type="NCBI Taxonomy" id="83332"/>
    <lineage>
        <taxon>Bacteria</taxon>
        <taxon>Bacillati</taxon>
        <taxon>Actinomycetota</taxon>
        <taxon>Actinomycetes</taxon>
        <taxon>Mycobacteriales</taxon>
        <taxon>Mycobacteriaceae</taxon>
        <taxon>Mycobacterium</taxon>
        <taxon>Mycobacterium tuberculosis complex</taxon>
    </lineage>
</organism>
<feature type="chain" id="PRO_0000120858" description="Uracil phosphoribosyltransferase">
    <location>
        <begin position="1"/>
        <end position="207"/>
    </location>
</feature>
<feature type="binding site" evidence="1">
    <location>
        <position position="77"/>
    </location>
    <ligand>
        <name>5-phospho-alpha-D-ribose 1-diphosphate</name>
        <dbReference type="ChEBI" id="CHEBI:58017"/>
    </ligand>
</feature>
<feature type="binding site" evidence="1">
    <location>
        <position position="102"/>
    </location>
    <ligand>
        <name>5-phospho-alpha-D-ribose 1-diphosphate</name>
        <dbReference type="ChEBI" id="CHEBI:58017"/>
    </ligand>
</feature>
<feature type="binding site" evidence="1">
    <location>
        <begin position="129"/>
        <end position="137"/>
    </location>
    <ligand>
        <name>5-phospho-alpha-D-ribose 1-diphosphate</name>
        <dbReference type="ChEBI" id="CHEBI:58017"/>
    </ligand>
</feature>
<feature type="binding site" evidence="1">
    <location>
        <position position="192"/>
    </location>
    <ligand>
        <name>uracil</name>
        <dbReference type="ChEBI" id="CHEBI:17568"/>
    </ligand>
</feature>
<feature type="binding site" evidence="1">
    <location>
        <begin position="197"/>
        <end position="199"/>
    </location>
    <ligand>
        <name>uracil</name>
        <dbReference type="ChEBI" id="CHEBI:17568"/>
    </ligand>
</feature>
<feature type="binding site" evidence="1">
    <location>
        <position position="198"/>
    </location>
    <ligand>
        <name>5-phospho-alpha-D-ribose 1-diphosphate</name>
        <dbReference type="ChEBI" id="CHEBI:58017"/>
    </ligand>
</feature>
<feature type="strand" evidence="2">
    <location>
        <begin position="3"/>
        <end position="5"/>
    </location>
</feature>
<feature type="helix" evidence="2">
    <location>
        <begin position="9"/>
        <end position="19"/>
    </location>
</feature>
<feature type="strand" evidence="2">
    <location>
        <begin position="21"/>
        <end position="23"/>
    </location>
</feature>
<feature type="helix" evidence="2">
    <location>
        <begin position="25"/>
        <end position="43"/>
    </location>
</feature>
<feature type="strand" evidence="2">
    <location>
        <begin position="50"/>
        <end position="56"/>
    </location>
</feature>
<feature type="strand" evidence="2">
    <location>
        <begin position="59"/>
        <end position="65"/>
    </location>
</feature>
<feature type="strand" evidence="2">
    <location>
        <begin position="71"/>
        <end position="74"/>
    </location>
</feature>
<feature type="helix" evidence="2">
    <location>
        <begin position="78"/>
        <end position="80"/>
    </location>
</feature>
<feature type="helix" evidence="2">
    <location>
        <begin position="83"/>
        <end position="89"/>
    </location>
</feature>
<feature type="strand" evidence="2">
    <location>
        <begin position="104"/>
        <end position="106"/>
    </location>
</feature>
<feature type="strand" evidence="2">
    <location>
        <begin position="125"/>
        <end position="128"/>
    </location>
</feature>
<feature type="strand" evidence="2">
    <location>
        <begin position="130"/>
        <end position="132"/>
    </location>
</feature>
<feature type="helix" evidence="2">
    <location>
        <begin position="136"/>
        <end position="145"/>
    </location>
</feature>
<feature type="helix" evidence="2">
    <location>
        <begin position="146"/>
        <end position="148"/>
    </location>
</feature>
<feature type="strand" evidence="2">
    <location>
        <begin position="152"/>
        <end position="156"/>
    </location>
</feature>
<feature type="strand" evidence="2">
    <location>
        <begin position="158"/>
        <end position="160"/>
    </location>
</feature>
<feature type="helix" evidence="2">
    <location>
        <begin position="162"/>
        <end position="171"/>
    </location>
</feature>
<feature type="strand" evidence="2">
    <location>
        <begin position="176"/>
        <end position="182"/>
    </location>
</feature>
<feature type="strand" evidence="2">
    <location>
        <begin position="184"/>
        <end position="186"/>
    </location>
</feature>
<feature type="strand" evidence="2">
    <location>
        <begin position="192"/>
        <end position="195"/>
    </location>
</feature>
<feature type="turn" evidence="2">
    <location>
        <begin position="199"/>
        <end position="203"/>
    </location>
</feature>
<proteinExistence type="evidence at protein level"/>
<protein>
    <recommendedName>
        <fullName evidence="1">Uracil phosphoribosyltransferase</fullName>
        <ecNumber evidence="1">2.4.2.9</ecNumber>
    </recommendedName>
    <alternativeName>
        <fullName evidence="1">UMP pyrophosphorylase</fullName>
    </alternativeName>
    <alternativeName>
        <fullName evidence="1">UPRTase</fullName>
    </alternativeName>
</protein>
<comment type="function">
    <text evidence="1">Catalyzes the conversion of uracil and 5-phospho-alpha-D-ribose 1-diphosphate (PRPP) to UMP and diphosphate.</text>
</comment>
<comment type="catalytic activity">
    <reaction evidence="1">
        <text>UMP + diphosphate = 5-phospho-alpha-D-ribose 1-diphosphate + uracil</text>
        <dbReference type="Rhea" id="RHEA:13017"/>
        <dbReference type="ChEBI" id="CHEBI:17568"/>
        <dbReference type="ChEBI" id="CHEBI:33019"/>
        <dbReference type="ChEBI" id="CHEBI:57865"/>
        <dbReference type="ChEBI" id="CHEBI:58017"/>
        <dbReference type="EC" id="2.4.2.9"/>
    </reaction>
</comment>
<comment type="cofactor">
    <cofactor evidence="1">
        <name>Mg(2+)</name>
        <dbReference type="ChEBI" id="CHEBI:18420"/>
    </cofactor>
    <text evidence="1">Binds 1 Mg(2+) ion per subunit. The magnesium is bound as Mg-PRPP.</text>
</comment>
<comment type="activity regulation">
    <text evidence="1">Allosterically activated by GTP.</text>
</comment>
<comment type="pathway">
    <text evidence="1">Pyrimidine metabolism; UMP biosynthesis via salvage pathway; UMP from uracil: step 1/1.</text>
</comment>
<comment type="similarity">
    <text evidence="1">Belongs to the UPRTase family.</text>
</comment>
<keyword id="KW-0002">3D-structure</keyword>
<keyword id="KW-0021">Allosteric enzyme</keyword>
<keyword id="KW-0328">Glycosyltransferase</keyword>
<keyword id="KW-0342">GTP-binding</keyword>
<keyword id="KW-0460">Magnesium</keyword>
<keyword id="KW-0547">Nucleotide-binding</keyword>
<keyword id="KW-1185">Reference proteome</keyword>
<keyword id="KW-0808">Transferase</keyword>
<name>UPP_MYCTU</name>
<reference key="1">
    <citation type="journal article" date="1998" name="Nature">
        <title>Deciphering the biology of Mycobacterium tuberculosis from the complete genome sequence.</title>
        <authorList>
            <person name="Cole S.T."/>
            <person name="Brosch R."/>
            <person name="Parkhill J."/>
            <person name="Garnier T."/>
            <person name="Churcher C.M."/>
            <person name="Harris D.E."/>
            <person name="Gordon S.V."/>
            <person name="Eiglmeier K."/>
            <person name="Gas S."/>
            <person name="Barry C.E. III"/>
            <person name="Tekaia F."/>
            <person name="Badcock K."/>
            <person name="Basham D."/>
            <person name="Brown D."/>
            <person name="Chillingworth T."/>
            <person name="Connor R."/>
            <person name="Davies R.M."/>
            <person name="Devlin K."/>
            <person name="Feltwell T."/>
            <person name="Gentles S."/>
            <person name="Hamlin N."/>
            <person name="Holroyd S."/>
            <person name="Hornsby T."/>
            <person name="Jagels K."/>
            <person name="Krogh A."/>
            <person name="McLean J."/>
            <person name="Moule S."/>
            <person name="Murphy L.D."/>
            <person name="Oliver S."/>
            <person name="Osborne J."/>
            <person name="Quail M.A."/>
            <person name="Rajandream M.A."/>
            <person name="Rogers J."/>
            <person name="Rutter S."/>
            <person name="Seeger K."/>
            <person name="Skelton S."/>
            <person name="Squares S."/>
            <person name="Squares R."/>
            <person name="Sulston J.E."/>
            <person name="Taylor K."/>
            <person name="Whitehead S."/>
            <person name="Barrell B.G."/>
        </authorList>
    </citation>
    <scope>NUCLEOTIDE SEQUENCE [LARGE SCALE GENOMIC DNA]</scope>
    <source>
        <strain>ATCC 25618 / H37Rv</strain>
    </source>
</reference>
<reference key="2">
    <citation type="journal article" date="2011" name="Mol. Cell. Proteomics">
        <title>Proteogenomic analysis of Mycobacterium tuberculosis by high resolution mass spectrometry.</title>
        <authorList>
            <person name="Kelkar D.S."/>
            <person name="Kumar D."/>
            <person name="Kumar P."/>
            <person name="Balakrishnan L."/>
            <person name="Muthusamy B."/>
            <person name="Yadav A.K."/>
            <person name="Shrivastava P."/>
            <person name="Marimuthu A."/>
            <person name="Anand S."/>
            <person name="Sundaram H."/>
            <person name="Kingsbury R."/>
            <person name="Harsha H.C."/>
            <person name="Nair B."/>
            <person name="Prasad T.S."/>
            <person name="Chauhan D.S."/>
            <person name="Katoch K."/>
            <person name="Katoch V.M."/>
            <person name="Kumar P."/>
            <person name="Chaerkady R."/>
            <person name="Ramachandran S."/>
            <person name="Dash D."/>
            <person name="Pandey A."/>
        </authorList>
    </citation>
    <scope>IDENTIFICATION BY MASS SPECTROMETRY [LARGE SCALE ANALYSIS]</scope>
    <source>
        <strain>ATCC 25618 / H37Rv</strain>
    </source>
</reference>
<gene>
    <name evidence="1" type="primary">upp</name>
    <name type="ordered locus">Rv3309c</name>
    <name type="ORF">MTV016.08c</name>
</gene>
<dbReference type="EC" id="2.4.2.9" evidence="1"/>
<dbReference type="EMBL" id="AL123456">
    <property type="protein sequence ID" value="CCP46128.1"/>
    <property type="molecule type" value="Genomic_DNA"/>
</dbReference>
<dbReference type="PIR" id="D70842">
    <property type="entry name" value="D70842"/>
</dbReference>
<dbReference type="RefSeq" id="NP_217826.1">
    <property type="nucleotide sequence ID" value="NC_000962.3"/>
</dbReference>
<dbReference type="RefSeq" id="WP_003417245.1">
    <property type="nucleotide sequence ID" value="NZ_NVQJ01000003.1"/>
</dbReference>
<dbReference type="PDB" id="5E38">
    <property type="method" value="X-ray"/>
    <property type="resolution" value="3.00 A"/>
    <property type="chains" value="A/B/C/D=2-207"/>
</dbReference>
<dbReference type="PDBsum" id="5E38"/>
<dbReference type="SMR" id="P9WFF3"/>
<dbReference type="FunCoup" id="P9WFF3">
    <property type="interactions" value="419"/>
</dbReference>
<dbReference type="STRING" id="83332.Rv3309c"/>
<dbReference type="PaxDb" id="83332-Rv3309c"/>
<dbReference type="DNASU" id="887944"/>
<dbReference type="GeneID" id="45427304"/>
<dbReference type="GeneID" id="887944"/>
<dbReference type="KEGG" id="mtu:Rv3309c"/>
<dbReference type="KEGG" id="mtv:RVBD_3309c"/>
<dbReference type="TubercuList" id="Rv3309c"/>
<dbReference type="eggNOG" id="COG0035">
    <property type="taxonomic scope" value="Bacteria"/>
</dbReference>
<dbReference type="InParanoid" id="P9WFF3"/>
<dbReference type="OrthoDB" id="9781675at2"/>
<dbReference type="PhylomeDB" id="P9WFF3"/>
<dbReference type="BRENDA" id="2.4.2.9">
    <property type="organism ID" value="3445"/>
</dbReference>
<dbReference type="UniPathway" id="UPA00574">
    <property type="reaction ID" value="UER00636"/>
</dbReference>
<dbReference type="EvolutionaryTrace" id="P9WFF3"/>
<dbReference type="Proteomes" id="UP000001584">
    <property type="component" value="Chromosome"/>
</dbReference>
<dbReference type="GO" id="GO:0005737">
    <property type="term" value="C:cytoplasm"/>
    <property type="evidence" value="ECO:0000318"/>
    <property type="project" value="GO_Central"/>
</dbReference>
<dbReference type="GO" id="GO:0005886">
    <property type="term" value="C:plasma membrane"/>
    <property type="evidence" value="ECO:0007005"/>
    <property type="project" value="MTBBASE"/>
</dbReference>
<dbReference type="GO" id="GO:0005525">
    <property type="term" value="F:GTP binding"/>
    <property type="evidence" value="ECO:0007669"/>
    <property type="project" value="UniProtKB-KW"/>
</dbReference>
<dbReference type="GO" id="GO:0000287">
    <property type="term" value="F:magnesium ion binding"/>
    <property type="evidence" value="ECO:0007669"/>
    <property type="project" value="UniProtKB-UniRule"/>
</dbReference>
<dbReference type="GO" id="GO:0004845">
    <property type="term" value="F:uracil phosphoribosyltransferase activity"/>
    <property type="evidence" value="ECO:0000318"/>
    <property type="project" value="GO_Central"/>
</dbReference>
<dbReference type="GO" id="GO:0044206">
    <property type="term" value="P:UMP salvage"/>
    <property type="evidence" value="ECO:0007669"/>
    <property type="project" value="UniProtKB-UniRule"/>
</dbReference>
<dbReference type="GO" id="GO:0006223">
    <property type="term" value="P:uracil salvage"/>
    <property type="evidence" value="ECO:0007669"/>
    <property type="project" value="InterPro"/>
</dbReference>
<dbReference type="CDD" id="cd06223">
    <property type="entry name" value="PRTases_typeI"/>
    <property type="match status" value="1"/>
</dbReference>
<dbReference type="FunFam" id="3.40.50.2020:FF:000003">
    <property type="entry name" value="Uracil phosphoribosyltransferase"/>
    <property type="match status" value="1"/>
</dbReference>
<dbReference type="Gene3D" id="3.40.50.2020">
    <property type="match status" value="1"/>
</dbReference>
<dbReference type="HAMAP" id="MF_01218_B">
    <property type="entry name" value="Upp_B"/>
    <property type="match status" value="1"/>
</dbReference>
<dbReference type="InterPro" id="IPR000836">
    <property type="entry name" value="PRibTrfase_dom"/>
</dbReference>
<dbReference type="InterPro" id="IPR029057">
    <property type="entry name" value="PRTase-like"/>
</dbReference>
<dbReference type="InterPro" id="IPR034332">
    <property type="entry name" value="Upp_B"/>
</dbReference>
<dbReference type="InterPro" id="IPR050054">
    <property type="entry name" value="UPRTase/APRTase"/>
</dbReference>
<dbReference type="InterPro" id="IPR005765">
    <property type="entry name" value="Ura_phspho_trans"/>
</dbReference>
<dbReference type="NCBIfam" id="NF001097">
    <property type="entry name" value="PRK00129.1"/>
    <property type="match status" value="1"/>
</dbReference>
<dbReference type="NCBIfam" id="TIGR01091">
    <property type="entry name" value="upp"/>
    <property type="match status" value="1"/>
</dbReference>
<dbReference type="PANTHER" id="PTHR32315">
    <property type="entry name" value="ADENINE PHOSPHORIBOSYLTRANSFERASE"/>
    <property type="match status" value="1"/>
</dbReference>
<dbReference type="PANTHER" id="PTHR32315:SF4">
    <property type="entry name" value="URACIL PHOSPHORIBOSYLTRANSFERASE, CHLOROPLASTIC"/>
    <property type="match status" value="1"/>
</dbReference>
<dbReference type="Pfam" id="PF14681">
    <property type="entry name" value="UPRTase"/>
    <property type="match status" value="1"/>
</dbReference>
<dbReference type="SUPFAM" id="SSF53271">
    <property type="entry name" value="PRTase-like"/>
    <property type="match status" value="1"/>
</dbReference>